<sequence length="410" mass="46453">MKLSKLLQLAVFSSLVTSKNIFDLESLKQGLQDEETVNNDKREPVNLLYLDRFKMGVSDEAKGNAKFKRDPKNVIDPASLKEGSAEEEQKDKREPKNLFNLQALHEGLKDEETKSKREAKNLPNLEALEEALKGGSLPKKDAKNLIDLVALKQSLEKEAAKRDAKNIPDLEALKTGIEEEEGQVAKRDAKNVINLSNFIETPSKREGKNLFDLTKFQQSGQPIKKRDQKILKQEKSLFVLNSVDCFNNLLQSILPQLSSISIFSSYIRQFASIDARTANPQKVMLIVAPDNDSLETKLSDLKPWEFPEQITPEQSEQEQDKTLKNNLLHFLNGHLINNFEENLVIDKSSTDAVTIISKLNNGKFLKIKQDQLSQKFSIRLLDSENWIDVETIKQVENGFVLIINDSLVKP</sequence>
<proteinExistence type="inferred from homology"/>
<organism>
    <name type="scientific">Candida albicans (strain SC5314 / ATCC MYA-2876)</name>
    <name type="common">Yeast</name>
    <dbReference type="NCBI Taxonomy" id="237561"/>
    <lineage>
        <taxon>Eukaryota</taxon>
        <taxon>Fungi</taxon>
        <taxon>Dikarya</taxon>
        <taxon>Ascomycota</taxon>
        <taxon>Saccharomycotina</taxon>
        <taxon>Pichiomycetes</taxon>
        <taxon>Debaryomycetaceae</taxon>
        <taxon>Candida/Lodderomyces clade</taxon>
        <taxon>Candida</taxon>
    </lineage>
</organism>
<accession>Q5AI48</accession>
<accession>A0A1D8PCZ0</accession>
<evidence type="ECO:0000250" key="1"/>
<evidence type="ECO:0000255" key="2"/>
<evidence type="ECO:0000256" key="3">
    <source>
        <dbReference type="SAM" id="MobiDB-lite"/>
    </source>
</evidence>
<name>YFAS1_CANAL</name>
<feature type="signal peptide" evidence="2">
    <location>
        <begin position="1"/>
        <end position="18"/>
    </location>
</feature>
<feature type="chain" id="PRO_0000008793" description="FAS1 domain-containing protein CaO19.3004">
    <location>
        <begin position="19"/>
        <end position="410"/>
    </location>
</feature>
<feature type="domain" description="FAS1">
    <location>
        <begin position="247"/>
        <end position="407"/>
    </location>
</feature>
<feature type="region of interest" description="Disordered" evidence="3">
    <location>
        <begin position="64"/>
        <end position="98"/>
    </location>
</feature>
<feature type="compositionally biased region" description="Basic and acidic residues" evidence="3">
    <location>
        <begin position="64"/>
        <end position="73"/>
    </location>
</feature>
<feature type="compositionally biased region" description="Basic and acidic residues" evidence="3">
    <location>
        <begin position="83"/>
        <end position="96"/>
    </location>
</feature>
<keyword id="KW-1185">Reference proteome</keyword>
<keyword id="KW-0732">Signal</keyword>
<keyword id="KW-0926">Vacuole</keyword>
<protein>
    <recommendedName>
        <fullName>FAS1 domain-containing protein CaO19.3004</fullName>
    </recommendedName>
</protein>
<gene>
    <name type="ordered locus">CAALFM_C103120WA</name>
    <name type="ORF">CaO19.10522</name>
    <name type="ORF">CaO19.3004</name>
</gene>
<comment type="subcellular location">
    <subcellularLocation>
        <location evidence="1">Vacuole</location>
    </subcellularLocation>
</comment>
<dbReference type="EMBL" id="CP017623">
    <property type="protein sequence ID" value="AOW25993.1"/>
    <property type="molecule type" value="Genomic_DNA"/>
</dbReference>
<dbReference type="RefSeq" id="XP_721502.1">
    <property type="nucleotide sequence ID" value="XM_716409.2"/>
</dbReference>
<dbReference type="SMR" id="Q5AI48"/>
<dbReference type="STRING" id="237561.Q5AI48"/>
<dbReference type="EnsemblFungi" id="C1_03120W_A-T">
    <property type="protein sequence ID" value="C1_03120W_A-T-p1"/>
    <property type="gene ID" value="C1_03120W_A"/>
</dbReference>
<dbReference type="GeneID" id="3636926"/>
<dbReference type="KEGG" id="cal:CAALFM_C103120WA"/>
<dbReference type="CGD" id="CAL0000186184">
    <property type="gene designation" value="orf19.10522"/>
</dbReference>
<dbReference type="VEuPathDB" id="FungiDB:C1_03120W_A"/>
<dbReference type="eggNOG" id="ENOG502S3U5">
    <property type="taxonomic scope" value="Eukaryota"/>
</dbReference>
<dbReference type="HOGENOM" id="CLU_052194_0_0_1"/>
<dbReference type="InParanoid" id="Q5AI48"/>
<dbReference type="OrthoDB" id="5551751at2759"/>
<dbReference type="PRO" id="PR:Q5AI48"/>
<dbReference type="Proteomes" id="UP000000559">
    <property type="component" value="Chromosome 1"/>
</dbReference>
<dbReference type="GO" id="GO:0005773">
    <property type="term" value="C:vacuole"/>
    <property type="evidence" value="ECO:0007669"/>
    <property type="project" value="UniProtKB-SubCell"/>
</dbReference>
<dbReference type="InterPro" id="IPR040200">
    <property type="entry name" value="Mug57-like"/>
</dbReference>
<dbReference type="PANTHER" id="PTHR28156">
    <property type="entry name" value="FAS1 DOMAIN-CONTAINING PROTEIN YDR262W"/>
    <property type="match status" value="1"/>
</dbReference>
<dbReference type="PANTHER" id="PTHR28156:SF1">
    <property type="entry name" value="FAS1 DOMAIN-CONTAINING PROTEIN YDR262W"/>
    <property type="match status" value="1"/>
</dbReference>
<reference key="1">
    <citation type="journal article" date="2004" name="Proc. Natl. Acad. Sci. U.S.A.">
        <title>The diploid genome sequence of Candida albicans.</title>
        <authorList>
            <person name="Jones T."/>
            <person name="Federspiel N.A."/>
            <person name="Chibana H."/>
            <person name="Dungan J."/>
            <person name="Kalman S."/>
            <person name="Magee B.B."/>
            <person name="Newport G."/>
            <person name="Thorstenson Y.R."/>
            <person name="Agabian N."/>
            <person name="Magee P.T."/>
            <person name="Davis R.W."/>
            <person name="Scherer S."/>
        </authorList>
    </citation>
    <scope>NUCLEOTIDE SEQUENCE [LARGE SCALE GENOMIC DNA]</scope>
    <source>
        <strain>SC5314 / ATCC MYA-2876</strain>
    </source>
</reference>
<reference key="2">
    <citation type="journal article" date="2007" name="Genome Biol.">
        <title>Assembly of the Candida albicans genome into sixteen supercontigs aligned on the eight chromosomes.</title>
        <authorList>
            <person name="van het Hoog M."/>
            <person name="Rast T.J."/>
            <person name="Martchenko M."/>
            <person name="Grindle S."/>
            <person name="Dignard D."/>
            <person name="Hogues H."/>
            <person name="Cuomo C."/>
            <person name="Berriman M."/>
            <person name="Scherer S."/>
            <person name="Magee B.B."/>
            <person name="Whiteway M."/>
            <person name="Chibana H."/>
            <person name="Nantel A."/>
            <person name="Magee P.T."/>
        </authorList>
    </citation>
    <scope>GENOME REANNOTATION</scope>
    <source>
        <strain>SC5314 / ATCC MYA-2876</strain>
    </source>
</reference>
<reference key="3">
    <citation type="journal article" date="2013" name="Genome Biol.">
        <title>Assembly of a phased diploid Candida albicans genome facilitates allele-specific measurements and provides a simple model for repeat and indel structure.</title>
        <authorList>
            <person name="Muzzey D."/>
            <person name="Schwartz K."/>
            <person name="Weissman J.S."/>
            <person name="Sherlock G."/>
        </authorList>
    </citation>
    <scope>NUCLEOTIDE SEQUENCE [LARGE SCALE GENOMIC DNA]</scope>
    <scope>GENOME REANNOTATION</scope>
    <source>
        <strain>SC5314 / ATCC MYA-2876</strain>
    </source>
</reference>